<sequence length="625" mass="70116">MVQEYDVIVIGAGHAGVEAGLASARRGAKTLMLTINLDNIAFMPCNPSVGGPAKGIVVREIDALGGQMAKTIDKTHIQMRMLNTGKGPAVRALRAQADKVLYQQEMKRVIEDEENLHIMQGMVDELIIEDNEVKGVRTNIGTEYLSKAVIITTGTFLRGEIILGNMKYSSGPNHQLPSITLSDNLRELGFDIVRFKTGTPPRVNSKTIDYSKTEIQPGDDVGRAFSFETTEYILDQLPCWLTYTNAETHKVIDDNLHLSAMYSGMIKGTGPRYCPSIEDKFVRFNDKPRHQLFLEPEGRNTNEVYVQGLSTSLPEHVQRQMLETIPGLEKADMMRAGYAIEYDAIVPTQLWPTLETKMIKNLYTAGQINGTSGYEEAAGQGLMAGINAAGKVLNTGEKILSRSDAYIGVLIDDLVTKGTNEPYRLLTSRAEYRLLLRHDNADLRLTDMGYELGMISEERYARFNEKRQQIDAEIKRLSDIRIKPNEHTQAIIEQHGGSRLKDGILAIDLLRRPEMTYDIILELLEEEHQLNADVEEQVEIQTKYEGYINKSLQQVEKVKRMEEKKIPEDLDYSKIDSLATEAREKLSEVKPLNIAQASRISGVNPADISILLIYLEQGKLQRVSD</sequence>
<protein>
    <recommendedName>
        <fullName evidence="1">tRNA uridine 5-carboxymethylaminomethyl modification enzyme MnmG</fullName>
    </recommendedName>
    <alternativeName>
        <fullName evidence="1">Glucose-inhibited division protein A</fullName>
    </alternativeName>
</protein>
<feature type="chain" id="PRO_1000071417" description="tRNA uridine 5-carboxymethylaminomethyl modification enzyme MnmG">
    <location>
        <begin position="1"/>
        <end position="625"/>
    </location>
</feature>
<feature type="binding site" evidence="1">
    <location>
        <begin position="11"/>
        <end position="16"/>
    </location>
    <ligand>
        <name>FAD</name>
        <dbReference type="ChEBI" id="CHEBI:57692"/>
    </ligand>
</feature>
<feature type="binding site" evidence="1">
    <location>
        <position position="123"/>
    </location>
    <ligand>
        <name>FAD</name>
        <dbReference type="ChEBI" id="CHEBI:57692"/>
    </ligand>
</feature>
<feature type="binding site" evidence="1">
    <location>
        <position position="178"/>
    </location>
    <ligand>
        <name>FAD</name>
        <dbReference type="ChEBI" id="CHEBI:57692"/>
    </ligand>
</feature>
<feature type="binding site" evidence="1">
    <location>
        <begin position="270"/>
        <end position="284"/>
    </location>
    <ligand>
        <name>NAD(+)</name>
        <dbReference type="ChEBI" id="CHEBI:57540"/>
    </ligand>
</feature>
<feature type="binding site" evidence="1">
    <location>
        <position position="367"/>
    </location>
    <ligand>
        <name>FAD</name>
        <dbReference type="ChEBI" id="CHEBI:57692"/>
    </ligand>
</feature>
<keyword id="KW-0963">Cytoplasm</keyword>
<keyword id="KW-0274">FAD</keyword>
<keyword id="KW-0285">Flavoprotein</keyword>
<keyword id="KW-0520">NAD</keyword>
<keyword id="KW-0819">tRNA processing</keyword>
<organism>
    <name type="scientific">Staphylococcus aureus (strain Newman)</name>
    <dbReference type="NCBI Taxonomy" id="426430"/>
    <lineage>
        <taxon>Bacteria</taxon>
        <taxon>Bacillati</taxon>
        <taxon>Bacillota</taxon>
        <taxon>Bacilli</taxon>
        <taxon>Bacillales</taxon>
        <taxon>Staphylococcaceae</taxon>
        <taxon>Staphylococcus</taxon>
    </lineage>
</organism>
<comment type="function">
    <text evidence="1">NAD-binding protein involved in the addition of a carboxymethylaminomethyl (cmnm) group at the wobble position (U34) of certain tRNAs, forming tRNA-cmnm(5)s(2)U34.</text>
</comment>
<comment type="cofactor">
    <cofactor evidence="1">
        <name>FAD</name>
        <dbReference type="ChEBI" id="CHEBI:57692"/>
    </cofactor>
</comment>
<comment type="subunit">
    <text evidence="1">Homodimer. Heterotetramer of two MnmE and two MnmG subunits.</text>
</comment>
<comment type="subcellular location">
    <subcellularLocation>
        <location evidence="1">Cytoplasm</location>
    </subcellularLocation>
</comment>
<comment type="similarity">
    <text evidence="1">Belongs to the MnmG family.</text>
</comment>
<dbReference type="EMBL" id="AP009351">
    <property type="protein sequence ID" value="BAF68883.1"/>
    <property type="molecule type" value="Genomic_DNA"/>
</dbReference>
<dbReference type="RefSeq" id="WP_000249662.1">
    <property type="nucleotide sequence ID" value="NZ_JBBIAE010000007.1"/>
</dbReference>
<dbReference type="SMR" id="A6QKK1"/>
<dbReference type="KEGG" id="sae:NWMN_2611"/>
<dbReference type="HOGENOM" id="CLU_007831_2_2_9"/>
<dbReference type="Proteomes" id="UP000006386">
    <property type="component" value="Chromosome"/>
</dbReference>
<dbReference type="GO" id="GO:0005829">
    <property type="term" value="C:cytosol"/>
    <property type="evidence" value="ECO:0007669"/>
    <property type="project" value="TreeGrafter"/>
</dbReference>
<dbReference type="GO" id="GO:0050660">
    <property type="term" value="F:flavin adenine dinucleotide binding"/>
    <property type="evidence" value="ECO:0007669"/>
    <property type="project" value="UniProtKB-UniRule"/>
</dbReference>
<dbReference type="GO" id="GO:0030488">
    <property type="term" value="P:tRNA methylation"/>
    <property type="evidence" value="ECO:0007669"/>
    <property type="project" value="TreeGrafter"/>
</dbReference>
<dbReference type="GO" id="GO:0002098">
    <property type="term" value="P:tRNA wobble uridine modification"/>
    <property type="evidence" value="ECO:0007669"/>
    <property type="project" value="InterPro"/>
</dbReference>
<dbReference type="FunFam" id="1.10.10.1800:FF:000001">
    <property type="entry name" value="tRNA uridine 5-carboxymethylaminomethyl modification enzyme MnmG"/>
    <property type="match status" value="1"/>
</dbReference>
<dbReference type="FunFam" id="1.10.150.570:FF:000001">
    <property type="entry name" value="tRNA uridine 5-carboxymethylaminomethyl modification enzyme MnmG"/>
    <property type="match status" value="1"/>
</dbReference>
<dbReference type="FunFam" id="3.50.50.60:FF:000002">
    <property type="entry name" value="tRNA uridine 5-carboxymethylaminomethyl modification enzyme MnmG"/>
    <property type="match status" value="1"/>
</dbReference>
<dbReference type="FunFam" id="3.50.50.60:FF:000063">
    <property type="entry name" value="tRNA uridine 5-carboxymethylaminomethyl modification enzyme MnmG"/>
    <property type="match status" value="1"/>
</dbReference>
<dbReference type="Gene3D" id="3.50.50.60">
    <property type="entry name" value="FAD/NAD(P)-binding domain"/>
    <property type="match status" value="2"/>
</dbReference>
<dbReference type="Gene3D" id="1.10.150.570">
    <property type="entry name" value="GidA associated domain, C-terminal subdomain"/>
    <property type="match status" value="1"/>
</dbReference>
<dbReference type="Gene3D" id="1.10.10.1800">
    <property type="entry name" value="tRNA uridine 5-carboxymethylaminomethyl modification enzyme MnmG/GidA"/>
    <property type="match status" value="1"/>
</dbReference>
<dbReference type="HAMAP" id="MF_00129">
    <property type="entry name" value="MnmG_GidA"/>
    <property type="match status" value="1"/>
</dbReference>
<dbReference type="InterPro" id="IPR036188">
    <property type="entry name" value="FAD/NAD-bd_sf"/>
</dbReference>
<dbReference type="InterPro" id="IPR049312">
    <property type="entry name" value="GIDA_C_N"/>
</dbReference>
<dbReference type="InterPro" id="IPR004416">
    <property type="entry name" value="MnmG"/>
</dbReference>
<dbReference type="InterPro" id="IPR002218">
    <property type="entry name" value="MnmG-rel"/>
</dbReference>
<dbReference type="InterPro" id="IPR020595">
    <property type="entry name" value="MnmG-rel_CS"/>
</dbReference>
<dbReference type="InterPro" id="IPR026904">
    <property type="entry name" value="MnmG_C"/>
</dbReference>
<dbReference type="InterPro" id="IPR047001">
    <property type="entry name" value="MnmG_C_subdom"/>
</dbReference>
<dbReference type="InterPro" id="IPR044920">
    <property type="entry name" value="MnmG_C_subdom_sf"/>
</dbReference>
<dbReference type="InterPro" id="IPR040131">
    <property type="entry name" value="MnmG_N"/>
</dbReference>
<dbReference type="NCBIfam" id="TIGR00136">
    <property type="entry name" value="mnmG_gidA"/>
    <property type="match status" value="1"/>
</dbReference>
<dbReference type="PANTHER" id="PTHR11806">
    <property type="entry name" value="GLUCOSE INHIBITED DIVISION PROTEIN A"/>
    <property type="match status" value="1"/>
</dbReference>
<dbReference type="PANTHER" id="PTHR11806:SF0">
    <property type="entry name" value="PROTEIN MTO1 HOMOLOG, MITOCHONDRIAL"/>
    <property type="match status" value="1"/>
</dbReference>
<dbReference type="Pfam" id="PF01134">
    <property type="entry name" value="GIDA"/>
    <property type="match status" value="1"/>
</dbReference>
<dbReference type="Pfam" id="PF21680">
    <property type="entry name" value="GIDA_C_1st"/>
    <property type="match status" value="1"/>
</dbReference>
<dbReference type="Pfam" id="PF13932">
    <property type="entry name" value="SAM_GIDA_C"/>
    <property type="match status" value="1"/>
</dbReference>
<dbReference type="PRINTS" id="PR00411">
    <property type="entry name" value="PNDRDTASEI"/>
</dbReference>
<dbReference type="SMART" id="SM01228">
    <property type="entry name" value="GIDA_assoc_3"/>
    <property type="match status" value="1"/>
</dbReference>
<dbReference type="SUPFAM" id="SSF51905">
    <property type="entry name" value="FAD/NAD(P)-binding domain"/>
    <property type="match status" value="1"/>
</dbReference>
<dbReference type="PROSITE" id="PS01280">
    <property type="entry name" value="GIDA_1"/>
    <property type="match status" value="1"/>
</dbReference>
<dbReference type="PROSITE" id="PS01281">
    <property type="entry name" value="GIDA_2"/>
    <property type="match status" value="1"/>
</dbReference>
<accession>A6QKK1</accession>
<evidence type="ECO:0000255" key="1">
    <source>
        <dbReference type="HAMAP-Rule" id="MF_00129"/>
    </source>
</evidence>
<gene>
    <name evidence="1" type="primary">mnmG</name>
    <name evidence="1" type="synonym">gidA</name>
    <name type="ordered locus">NWMN_2611</name>
</gene>
<name>MNMG_STAAE</name>
<proteinExistence type="inferred from homology"/>
<reference key="1">
    <citation type="journal article" date="2008" name="J. Bacteriol.">
        <title>Genome sequence of Staphylococcus aureus strain Newman and comparative analysis of staphylococcal genomes: polymorphism and evolution of two major pathogenicity islands.</title>
        <authorList>
            <person name="Baba T."/>
            <person name="Bae T."/>
            <person name="Schneewind O."/>
            <person name="Takeuchi F."/>
            <person name="Hiramatsu K."/>
        </authorList>
    </citation>
    <scope>NUCLEOTIDE SEQUENCE [LARGE SCALE GENOMIC DNA]</scope>
    <source>
        <strain>Newman</strain>
    </source>
</reference>